<evidence type="ECO:0000255" key="1">
    <source>
        <dbReference type="HAMAP-Rule" id="MF_00378"/>
    </source>
</evidence>
<feature type="chain" id="PRO_1000048771" description="Exodeoxyribonuclease 7 large subunit">
    <location>
        <begin position="1"/>
        <end position="448"/>
    </location>
</feature>
<proteinExistence type="inferred from homology"/>
<keyword id="KW-0963">Cytoplasm</keyword>
<keyword id="KW-0269">Exonuclease</keyword>
<keyword id="KW-0378">Hydrolase</keyword>
<keyword id="KW-0540">Nuclease</keyword>
<keyword id="KW-1185">Reference proteome</keyword>
<dbReference type="EC" id="3.1.11.6" evidence="1"/>
<dbReference type="EMBL" id="AE016830">
    <property type="protein sequence ID" value="AAO80785.1"/>
    <property type="molecule type" value="Genomic_DNA"/>
</dbReference>
<dbReference type="RefSeq" id="NP_814715.1">
    <property type="nucleotide sequence ID" value="NC_004668.1"/>
</dbReference>
<dbReference type="RefSeq" id="WP_002387036.1">
    <property type="nucleotide sequence ID" value="NZ_KE136527.1"/>
</dbReference>
<dbReference type="SMR" id="Q836W6"/>
<dbReference type="STRING" id="226185.EF_0979"/>
<dbReference type="EnsemblBacteria" id="AAO80785">
    <property type="protein sequence ID" value="AAO80785"/>
    <property type="gene ID" value="EF_0979"/>
</dbReference>
<dbReference type="KEGG" id="efa:EF0979"/>
<dbReference type="PATRIC" id="fig|226185.45.peg.3185"/>
<dbReference type="eggNOG" id="COG1570">
    <property type="taxonomic scope" value="Bacteria"/>
</dbReference>
<dbReference type="HOGENOM" id="CLU_023625_3_1_9"/>
<dbReference type="Proteomes" id="UP000001415">
    <property type="component" value="Chromosome"/>
</dbReference>
<dbReference type="GO" id="GO:0005737">
    <property type="term" value="C:cytoplasm"/>
    <property type="evidence" value="ECO:0007669"/>
    <property type="project" value="UniProtKB-SubCell"/>
</dbReference>
<dbReference type="GO" id="GO:0009318">
    <property type="term" value="C:exodeoxyribonuclease VII complex"/>
    <property type="evidence" value="ECO:0007669"/>
    <property type="project" value="InterPro"/>
</dbReference>
<dbReference type="GO" id="GO:0008855">
    <property type="term" value="F:exodeoxyribonuclease VII activity"/>
    <property type="evidence" value="ECO:0007669"/>
    <property type="project" value="UniProtKB-UniRule"/>
</dbReference>
<dbReference type="GO" id="GO:0003676">
    <property type="term" value="F:nucleic acid binding"/>
    <property type="evidence" value="ECO:0007669"/>
    <property type="project" value="InterPro"/>
</dbReference>
<dbReference type="GO" id="GO:0006308">
    <property type="term" value="P:DNA catabolic process"/>
    <property type="evidence" value="ECO:0007669"/>
    <property type="project" value="UniProtKB-UniRule"/>
</dbReference>
<dbReference type="CDD" id="cd04489">
    <property type="entry name" value="ExoVII_LU_OBF"/>
    <property type="match status" value="1"/>
</dbReference>
<dbReference type="HAMAP" id="MF_00378">
    <property type="entry name" value="Exonuc_7_L"/>
    <property type="match status" value="1"/>
</dbReference>
<dbReference type="InterPro" id="IPR003753">
    <property type="entry name" value="Exonuc_VII_L"/>
</dbReference>
<dbReference type="InterPro" id="IPR020579">
    <property type="entry name" value="Exonuc_VII_lsu_C"/>
</dbReference>
<dbReference type="InterPro" id="IPR025824">
    <property type="entry name" value="OB-fold_nuc-bd_dom"/>
</dbReference>
<dbReference type="NCBIfam" id="TIGR00237">
    <property type="entry name" value="xseA"/>
    <property type="match status" value="1"/>
</dbReference>
<dbReference type="PANTHER" id="PTHR30008">
    <property type="entry name" value="EXODEOXYRIBONUCLEASE 7 LARGE SUBUNIT"/>
    <property type="match status" value="1"/>
</dbReference>
<dbReference type="PANTHER" id="PTHR30008:SF0">
    <property type="entry name" value="EXODEOXYRIBONUCLEASE 7 LARGE SUBUNIT"/>
    <property type="match status" value="1"/>
</dbReference>
<dbReference type="Pfam" id="PF02601">
    <property type="entry name" value="Exonuc_VII_L"/>
    <property type="match status" value="1"/>
</dbReference>
<dbReference type="Pfam" id="PF13742">
    <property type="entry name" value="tRNA_anti_2"/>
    <property type="match status" value="1"/>
</dbReference>
<accession>Q836W6</accession>
<name>EX7L_ENTFA</name>
<reference key="1">
    <citation type="journal article" date="2003" name="Science">
        <title>Role of mobile DNA in the evolution of vancomycin-resistant Enterococcus faecalis.</title>
        <authorList>
            <person name="Paulsen I.T."/>
            <person name="Banerjei L."/>
            <person name="Myers G.S.A."/>
            <person name="Nelson K.E."/>
            <person name="Seshadri R."/>
            <person name="Read T.D."/>
            <person name="Fouts D.E."/>
            <person name="Eisen J.A."/>
            <person name="Gill S.R."/>
            <person name="Heidelberg J.F."/>
            <person name="Tettelin H."/>
            <person name="Dodson R.J."/>
            <person name="Umayam L.A."/>
            <person name="Brinkac L.M."/>
            <person name="Beanan M.J."/>
            <person name="Daugherty S.C."/>
            <person name="DeBoy R.T."/>
            <person name="Durkin S.A."/>
            <person name="Kolonay J.F."/>
            <person name="Madupu R."/>
            <person name="Nelson W.C."/>
            <person name="Vamathevan J.J."/>
            <person name="Tran B."/>
            <person name="Upton J."/>
            <person name="Hansen T."/>
            <person name="Shetty J."/>
            <person name="Khouri H.M."/>
            <person name="Utterback T.R."/>
            <person name="Radune D."/>
            <person name="Ketchum K.A."/>
            <person name="Dougherty B.A."/>
            <person name="Fraser C.M."/>
        </authorList>
    </citation>
    <scope>NUCLEOTIDE SEQUENCE [LARGE SCALE GENOMIC DNA]</scope>
    <source>
        <strain>ATCC 700802 / V583</strain>
    </source>
</reference>
<comment type="function">
    <text evidence="1">Bidirectionally degrades single-stranded DNA into large acid-insoluble oligonucleotides, which are then degraded further into small acid-soluble oligonucleotides.</text>
</comment>
<comment type="catalytic activity">
    <reaction evidence="1">
        <text>Exonucleolytic cleavage in either 5'- to 3'- or 3'- to 5'-direction to yield nucleoside 5'-phosphates.</text>
        <dbReference type="EC" id="3.1.11.6"/>
    </reaction>
</comment>
<comment type="subunit">
    <text evidence="1">Heterooligomer composed of large and small subunits.</text>
</comment>
<comment type="subcellular location">
    <subcellularLocation>
        <location evidence="1">Cytoplasm</location>
    </subcellularLocation>
</comment>
<comment type="similarity">
    <text evidence="1">Belongs to the XseA family.</text>
</comment>
<protein>
    <recommendedName>
        <fullName evidence="1">Exodeoxyribonuclease 7 large subunit</fullName>
        <ecNumber evidence="1">3.1.11.6</ecNumber>
    </recommendedName>
    <alternativeName>
        <fullName evidence="1">Exodeoxyribonuclease VII large subunit</fullName>
        <shortName evidence="1">Exonuclease VII large subunit</shortName>
    </alternativeName>
</protein>
<gene>
    <name evidence="1" type="primary">xseA</name>
    <name type="ordered locus">EF_0979</name>
</gene>
<sequence length="448" mass="51110">MTQQYLTVTALTKYLKRKFDADPYLGRVYLTGEISNFRFRANAHQYFSLKDDHAKISAIMFKSAFQKLKFQPKEGMKVMVVGRISLYENSGSYQIYIEHMEPDGVGALYQALAELREKLGKEGLFEGPKQQLPRYPKRIAVVTSPSGAVIRDIITTVKRRYPIAQLVLFPTLVQGEQAADDIVRNIQRADAQSDFDTMIIGRGGGSIEDLWPFNEEKVARAIHAATTPIISSVGHETDVTIADMVADVRAATPTAAAELAVPVLNEELLRISERRSRLEQSFLYLLQQRTERFQRLQNSYVFKQPERLYEGQTIKLDRMTQRLFQAMTTIHHQKQRQAQGIIAQLQQQTPKGQLRESQQQLAFLQRNLQTQMTQLFLNKQKQFTSAVQQLDLLSPLKIMGRGYSYTTKEDRVVKTVTELQPADQLTIHYADGTVQANVETITAKKEEF</sequence>
<organism>
    <name type="scientific">Enterococcus faecalis (strain ATCC 700802 / V583)</name>
    <dbReference type="NCBI Taxonomy" id="226185"/>
    <lineage>
        <taxon>Bacteria</taxon>
        <taxon>Bacillati</taxon>
        <taxon>Bacillota</taxon>
        <taxon>Bacilli</taxon>
        <taxon>Lactobacillales</taxon>
        <taxon>Enterococcaceae</taxon>
        <taxon>Enterococcus</taxon>
    </lineage>
</organism>